<organism>
    <name type="scientific">Cereibacter sphaeroides (strain ATCC 17025 / ATH 2.4.3)</name>
    <name type="common">Rhodobacter sphaeroides</name>
    <dbReference type="NCBI Taxonomy" id="349102"/>
    <lineage>
        <taxon>Bacteria</taxon>
        <taxon>Pseudomonadati</taxon>
        <taxon>Pseudomonadota</taxon>
        <taxon>Alphaproteobacteria</taxon>
        <taxon>Rhodobacterales</taxon>
        <taxon>Paracoccaceae</taxon>
        <taxon>Cereibacter</taxon>
    </lineage>
</organism>
<keyword id="KW-0131">Cell cycle</keyword>
<keyword id="KW-0132">Cell division</keyword>
<keyword id="KW-0133">Cell shape</keyword>
<keyword id="KW-0961">Cell wall biogenesis/degradation</keyword>
<keyword id="KW-0963">Cytoplasm</keyword>
<keyword id="KW-0274">FAD</keyword>
<keyword id="KW-0285">Flavoprotein</keyword>
<keyword id="KW-0521">NADP</keyword>
<keyword id="KW-0560">Oxidoreductase</keyword>
<keyword id="KW-0573">Peptidoglycan synthesis</keyword>
<accession>A4WQD8</accession>
<evidence type="ECO:0000255" key="1">
    <source>
        <dbReference type="HAMAP-Rule" id="MF_00037"/>
    </source>
</evidence>
<evidence type="ECO:0000256" key="2">
    <source>
        <dbReference type="SAM" id="MobiDB-lite"/>
    </source>
</evidence>
<name>MURB_CERS5</name>
<reference key="1">
    <citation type="submission" date="2007-04" db="EMBL/GenBank/DDBJ databases">
        <title>Complete sequence of chromosome of Rhodobacter sphaeroides ATCC 17025.</title>
        <authorList>
            <consortium name="US DOE Joint Genome Institute"/>
            <person name="Copeland A."/>
            <person name="Lucas S."/>
            <person name="Lapidus A."/>
            <person name="Barry K."/>
            <person name="Detter J.C."/>
            <person name="Glavina del Rio T."/>
            <person name="Hammon N."/>
            <person name="Israni S."/>
            <person name="Dalin E."/>
            <person name="Tice H."/>
            <person name="Pitluck S."/>
            <person name="Chertkov O."/>
            <person name="Brettin T."/>
            <person name="Bruce D."/>
            <person name="Han C."/>
            <person name="Schmutz J."/>
            <person name="Larimer F."/>
            <person name="Land M."/>
            <person name="Hauser L."/>
            <person name="Kyrpides N."/>
            <person name="Kim E."/>
            <person name="Richardson P."/>
            <person name="Mackenzie C."/>
            <person name="Choudhary M."/>
            <person name="Donohue T.J."/>
            <person name="Kaplan S."/>
        </authorList>
    </citation>
    <scope>NUCLEOTIDE SEQUENCE [LARGE SCALE GENOMIC DNA]</scope>
    <source>
        <strain>ATCC 17025 / ATH 2.4.3</strain>
    </source>
</reference>
<protein>
    <recommendedName>
        <fullName evidence="1">UDP-N-acetylenolpyruvoylglucosamine reductase</fullName>
        <ecNumber evidence="1">1.3.1.98</ecNumber>
    </recommendedName>
    <alternativeName>
        <fullName evidence="1">UDP-N-acetylmuramate dehydrogenase</fullName>
    </alternativeName>
</protein>
<comment type="function">
    <text evidence="1">Cell wall formation.</text>
</comment>
<comment type="catalytic activity">
    <reaction evidence="1">
        <text>UDP-N-acetyl-alpha-D-muramate + NADP(+) = UDP-N-acetyl-3-O-(1-carboxyvinyl)-alpha-D-glucosamine + NADPH + H(+)</text>
        <dbReference type="Rhea" id="RHEA:12248"/>
        <dbReference type="ChEBI" id="CHEBI:15378"/>
        <dbReference type="ChEBI" id="CHEBI:57783"/>
        <dbReference type="ChEBI" id="CHEBI:58349"/>
        <dbReference type="ChEBI" id="CHEBI:68483"/>
        <dbReference type="ChEBI" id="CHEBI:70757"/>
        <dbReference type="EC" id="1.3.1.98"/>
    </reaction>
</comment>
<comment type="cofactor">
    <cofactor evidence="1">
        <name>FAD</name>
        <dbReference type="ChEBI" id="CHEBI:57692"/>
    </cofactor>
</comment>
<comment type="pathway">
    <text evidence="1">Cell wall biogenesis; peptidoglycan biosynthesis.</text>
</comment>
<comment type="subcellular location">
    <subcellularLocation>
        <location evidence="1">Cytoplasm</location>
    </subcellularLocation>
</comment>
<comment type="similarity">
    <text evidence="1">Belongs to the MurB family.</text>
</comment>
<dbReference type="EC" id="1.3.1.98" evidence="1"/>
<dbReference type="EMBL" id="CP000661">
    <property type="protein sequence ID" value="ABP69602.1"/>
    <property type="molecule type" value="Genomic_DNA"/>
</dbReference>
<dbReference type="SMR" id="A4WQD8"/>
<dbReference type="STRING" id="349102.Rsph17025_0696"/>
<dbReference type="KEGG" id="rsq:Rsph17025_0696"/>
<dbReference type="eggNOG" id="COG0812">
    <property type="taxonomic scope" value="Bacteria"/>
</dbReference>
<dbReference type="HOGENOM" id="CLU_035304_1_0_5"/>
<dbReference type="BioCyc" id="RSPH349102:G1G8M-718-MONOMER"/>
<dbReference type="UniPathway" id="UPA00219"/>
<dbReference type="GO" id="GO:0005829">
    <property type="term" value="C:cytosol"/>
    <property type="evidence" value="ECO:0007669"/>
    <property type="project" value="TreeGrafter"/>
</dbReference>
<dbReference type="GO" id="GO:0071949">
    <property type="term" value="F:FAD binding"/>
    <property type="evidence" value="ECO:0007669"/>
    <property type="project" value="InterPro"/>
</dbReference>
<dbReference type="GO" id="GO:0008762">
    <property type="term" value="F:UDP-N-acetylmuramate dehydrogenase activity"/>
    <property type="evidence" value="ECO:0007669"/>
    <property type="project" value="UniProtKB-UniRule"/>
</dbReference>
<dbReference type="GO" id="GO:0051301">
    <property type="term" value="P:cell division"/>
    <property type="evidence" value="ECO:0007669"/>
    <property type="project" value="UniProtKB-KW"/>
</dbReference>
<dbReference type="GO" id="GO:0071555">
    <property type="term" value="P:cell wall organization"/>
    <property type="evidence" value="ECO:0007669"/>
    <property type="project" value="UniProtKB-KW"/>
</dbReference>
<dbReference type="GO" id="GO:0009252">
    <property type="term" value="P:peptidoglycan biosynthetic process"/>
    <property type="evidence" value="ECO:0007669"/>
    <property type="project" value="UniProtKB-UniRule"/>
</dbReference>
<dbReference type="GO" id="GO:0008360">
    <property type="term" value="P:regulation of cell shape"/>
    <property type="evidence" value="ECO:0007669"/>
    <property type="project" value="UniProtKB-KW"/>
</dbReference>
<dbReference type="Gene3D" id="3.30.465.10">
    <property type="match status" value="1"/>
</dbReference>
<dbReference type="Gene3D" id="3.90.78.10">
    <property type="entry name" value="UDP-N-acetylenolpyruvoylglucosamine reductase, C-terminal domain"/>
    <property type="match status" value="1"/>
</dbReference>
<dbReference type="Gene3D" id="3.30.43.10">
    <property type="entry name" value="Uridine Diphospho-n-acetylenolpyruvylglucosamine Reductase, domain 2"/>
    <property type="match status" value="1"/>
</dbReference>
<dbReference type="HAMAP" id="MF_00037">
    <property type="entry name" value="MurB"/>
    <property type="match status" value="1"/>
</dbReference>
<dbReference type="InterPro" id="IPR016166">
    <property type="entry name" value="FAD-bd_PCMH"/>
</dbReference>
<dbReference type="InterPro" id="IPR036318">
    <property type="entry name" value="FAD-bd_PCMH-like_sf"/>
</dbReference>
<dbReference type="InterPro" id="IPR016167">
    <property type="entry name" value="FAD-bd_PCMH_sub1"/>
</dbReference>
<dbReference type="InterPro" id="IPR016169">
    <property type="entry name" value="FAD-bd_PCMH_sub2"/>
</dbReference>
<dbReference type="InterPro" id="IPR003170">
    <property type="entry name" value="MurB"/>
</dbReference>
<dbReference type="InterPro" id="IPR011601">
    <property type="entry name" value="MurB_C"/>
</dbReference>
<dbReference type="InterPro" id="IPR036635">
    <property type="entry name" value="MurB_C_sf"/>
</dbReference>
<dbReference type="InterPro" id="IPR006094">
    <property type="entry name" value="Oxid_FAD_bind_N"/>
</dbReference>
<dbReference type="NCBIfam" id="TIGR00179">
    <property type="entry name" value="murB"/>
    <property type="match status" value="1"/>
</dbReference>
<dbReference type="NCBIfam" id="NF010480">
    <property type="entry name" value="PRK13905.1"/>
    <property type="match status" value="1"/>
</dbReference>
<dbReference type="PANTHER" id="PTHR21071">
    <property type="entry name" value="UDP-N-ACETYLENOLPYRUVOYLGLUCOSAMINE REDUCTASE"/>
    <property type="match status" value="1"/>
</dbReference>
<dbReference type="PANTHER" id="PTHR21071:SF4">
    <property type="entry name" value="UDP-N-ACETYLENOLPYRUVOYLGLUCOSAMINE REDUCTASE"/>
    <property type="match status" value="1"/>
</dbReference>
<dbReference type="Pfam" id="PF01565">
    <property type="entry name" value="FAD_binding_4"/>
    <property type="match status" value="1"/>
</dbReference>
<dbReference type="Pfam" id="PF02873">
    <property type="entry name" value="MurB_C"/>
    <property type="match status" value="1"/>
</dbReference>
<dbReference type="SUPFAM" id="SSF56176">
    <property type="entry name" value="FAD-binding/transporter-associated domain-like"/>
    <property type="match status" value="1"/>
</dbReference>
<dbReference type="SUPFAM" id="SSF56194">
    <property type="entry name" value="Uridine diphospho-N-Acetylenolpyruvylglucosamine reductase, MurB, C-terminal domain"/>
    <property type="match status" value="1"/>
</dbReference>
<dbReference type="PROSITE" id="PS51387">
    <property type="entry name" value="FAD_PCMH"/>
    <property type="match status" value="1"/>
</dbReference>
<proteinExistence type="inferred from homology"/>
<sequence length="308" mass="33048">MMPPVRGTLTEGRPLADLTWLRVGGPADWLFQPADEEDLAGFLAAHDPAVPVFPMGVGSNLIVRDGGLRAVVIRLGRGFNGIRVEGERVIAGAAALDAHVARRAAEAGRDLTFLRTIPGTIGGAVRMNAGCYGSYVADHLIEVRAITREGRAVTLPAADLGLAYRQSRLPEGWVLVEAAFRADAGDPAALARRMDEQIARRDSSQPTRDRSAGSTFRNPAGFSSTGRADDTHELKAWKLIDEAGMRGARRGGAQMSEMHSNFLINTGGATAADLEGLGEEVIKRVFQSSGIELQWEIMRVGEEPVNKQ</sequence>
<gene>
    <name evidence="1" type="primary">murB</name>
    <name type="ordered locus">Rsph17025_0696</name>
</gene>
<feature type="chain" id="PRO_1000002906" description="UDP-N-acetylenolpyruvoylglucosamine reductase">
    <location>
        <begin position="1"/>
        <end position="308"/>
    </location>
</feature>
<feature type="domain" description="FAD-binding PCMH-type" evidence="1">
    <location>
        <begin position="22"/>
        <end position="185"/>
    </location>
</feature>
<feature type="region of interest" description="Disordered" evidence="2">
    <location>
        <begin position="197"/>
        <end position="228"/>
    </location>
</feature>
<feature type="compositionally biased region" description="Basic and acidic residues" evidence="2">
    <location>
        <begin position="197"/>
        <end position="211"/>
    </location>
</feature>
<feature type="compositionally biased region" description="Polar residues" evidence="2">
    <location>
        <begin position="212"/>
        <end position="226"/>
    </location>
</feature>
<feature type="active site" evidence="1">
    <location>
        <position position="165"/>
    </location>
</feature>
<feature type="active site" description="Proton donor" evidence="1">
    <location>
        <position position="214"/>
    </location>
</feature>
<feature type="active site" evidence="1">
    <location>
        <position position="296"/>
    </location>
</feature>